<dbReference type="EC" id="1.14.12.19" evidence="1"/>
<dbReference type="EMBL" id="CP001396">
    <property type="protein sequence ID" value="ACR61832.1"/>
    <property type="molecule type" value="Genomic_DNA"/>
</dbReference>
<dbReference type="RefSeq" id="WP_001276072.1">
    <property type="nucleotide sequence ID" value="NC_012759.1"/>
</dbReference>
<dbReference type="SMR" id="C4ZXB4"/>
<dbReference type="GeneID" id="75206232"/>
<dbReference type="KEGG" id="ebw:BWG_2303"/>
<dbReference type="HOGENOM" id="CLU_102527_1_1_6"/>
<dbReference type="UniPathway" id="UPA00714"/>
<dbReference type="GO" id="GO:0008695">
    <property type="term" value="F:3-phenylpropionate dioxygenase activity"/>
    <property type="evidence" value="ECO:0007669"/>
    <property type="project" value="UniProtKB-UniRule"/>
</dbReference>
<dbReference type="GO" id="GO:0019380">
    <property type="term" value="P:3-phenylpropionate catabolic process"/>
    <property type="evidence" value="ECO:0007669"/>
    <property type="project" value="UniProtKB-UniRule"/>
</dbReference>
<dbReference type="CDD" id="cd00667">
    <property type="entry name" value="ring_hydroxylating_dioxygenases_beta"/>
    <property type="match status" value="1"/>
</dbReference>
<dbReference type="FunFam" id="3.10.450.50:FF:000008">
    <property type="entry name" value="3-phenylpropionate/cinnamic acid dioxygenase subunit beta"/>
    <property type="match status" value="1"/>
</dbReference>
<dbReference type="Gene3D" id="3.10.450.50">
    <property type="match status" value="1"/>
</dbReference>
<dbReference type="HAMAP" id="MF_01649">
    <property type="entry name" value="HcaF"/>
    <property type="match status" value="1"/>
</dbReference>
<dbReference type="InterPro" id="IPR054881">
    <property type="entry name" value="3PPDioc_HcaF"/>
</dbReference>
<dbReference type="InterPro" id="IPR023712">
    <property type="entry name" value="HcaF"/>
</dbReference>
<dbReference type="InterPro" id="IPR032710">
    <property type="entry name" value="NTF2-like_dom_sf"/>
</dbReference>
<dbReference type="InterPro" id="IPR000391">
    <property type="entry name" value="Rng_hydr_dOase-bsu"/>
</dbReference>
<dbReference type="NCBIfam" id="NF042947">
    <property type="entry name" value="3PPDioc_HcaF"/>
    <property type="match status" value="1"/>
</dbReference>
<dbReference type="NCBIfam" id="NF007479">
    <property type="entry name" value="PRK10069.1"/>
    <property type="match status" value="1"/>
</dbReference>
<dbReference type="PANTHER" id="PTHR41534:SF2">
    <property type="entry name" value="3-PHENYLPROPIONATE_CINNAMIC ACID DIOXYGENASE SUBUNIT BETA"/>
    <property type="match status" value="1"/>
</dbReference>
<dbReference type="PANTHER" id="PTHR41534">
    <property type="entry name" value="BLR3401 PROTEIN"/>
    <property type="match status" value="1"/>
</dbReference>
<dbReference type="Pfam" id="PF00866">
    <property type="entry name" value="Ring_hydroxyl_B"/>
    <property type="match status" value="1"/>
</dbReference>
<dbReference type="SUPFAM" id="SSF54427">
    <property type="entry name" value="NTF2-like"/>
    <property type="match status" value="1"/>
</dbReference>
<feature type="chain" id="PRO_1000215850" description="3-phenylpropionate/cinnamic acid dioxygenase subunit beta">
    <location>
        <begin position="1"/>
        <end position="172"/>
    </location>
</feature>
<proteinExistence type="inferred from homology"/>
<keyword id="KW-0058">Aromatic hydrocarbons catabolism</keyword>
<keyword id="KW-0223">Dioxygenase</keyword>
<keyword id="KW-0520">NAD</keyword>
<keyword id="KW-0560">Oxidoreductase</keyword>
<sequence length="172" mass="20579">MSAQVSLELHHRISQFLFHEASLLDDWKFRDWLAQLDEEIRYTMRTTVNAQTRDRRKGVQPPTTWIFNDTKDQLERRIARLETGMAWAEEPPSRTRHLISNCQISETDIPNVFAVRVNYLLYRAQKERDETFYVGTRFDKVRRLEDDNWRLLERDIVLDQAVITSHNLSVLF</sequence>
<protein>
    <recommendedName>
        <fullName evidence="1">3-phenylpropionate/cinnamic acid dioxygenase subunit beta</fullName>
        <ecNumber evidence="1">1.14.12.19</ecNumber>
    </recommendedName>
</protein>
<gene>
    <name evidence="1" type="primary">hcaF</name>
    <name type="ordered locus">BWG_2303</name>
</gene>
<accession>C4ZXB4</accession>
<comment type="function">
    <text evidence="1">Part of the multicomponent 3-phenylpropionate dioxygenase. Converts 3-phenylpropionic acid (PP) and cinnamic acid (CI) into 3-phenylpropionate-dihydrodiol (PP-dihydrodiol) and cinnamic acid-dihydrodiol (CI-dihydrodiol), respectively.</text>
</comment>
<comment type="catalytic activity">
    <reaction evidence="1">
        <text>3-phenylpropanoate + NADH + O2 + H(+) = 3-(cis-5,6-dihydroxycyclohexa-1,3-dien-1-yl)propanoate + NAD(+)</text>
        <dbReference type="Rhea" id="RHEA:20357"/>
        <dbReference type="ChEBI" id="CHEBI:15378"/>
        <dbReference type="ChEBI" id="CHEBI:15379"/>
        <dbReference type="ChEBI" id="CHEBI:51057"/>
        <dbReference type="ChEBI" id="CHEBI:57540"/>
        <dbReference type="ChEBI" id="CHEBI:57945"/>
        <dbReference type="ChEBI" id="CHEBI:60087"/>
        <dbReference type="EC" id="1.14.12.19"/>
    </reaction>
</comment>
<comment type="catalytic activity">
    <reaction evidence="1">
        <text>(E)-cinnamate + NADH + O2 + H(+) = (2E)-3-(cis-5,6-dihydroxycyclohexa-1,3-dien-1-yl)prop-2-enoate + NAD(+)</text>
        <dbReference type="Rhea" id="RHEA:25058"/>
        <dbReference type="ChEBI" id="CHEBI:15378"/>
        <dbReference type="ChEBI" id="CHEBI:15379"/>
        <dbReference type="ChEBI" id="CHEBI:15669"/>
        <dbReference type="ChEBI" id="CHEBI:57540"/>
        <dbReference type="ChEBI" id="CHEBI:57945"/>
        <dbReference type="ChEBI" id="CHEBI:61451"/>
        <dbReference type="EC" id="1.14.12.19"/>
    </reaction>
</comment>
<comment type="pathway">
    <text evidence="1">Aromatic compound metabolism; 3-phenylpropanoate degradation.</text>
</comment>
<comment type="subunit">
    <text evidence="1">This dioxygenase system consists of four proteins: the two subunits of the hydroxylase component (HcaE and HcaF), a ferredoxin (HcaC) and a ferredoxin reductase (HcaD).</text>
</comment>
<comment type="similarity">
    <text evidence="1">Belongs to the bacterial ring-hydroxylating dioxygenase beta subunit family.</text>
</comment>
<organism>
    <name type="scientific">Escherichia coli (strain K12 / MC4100 / BW2952)</name>
    <dbReference type="NCBI Taxonomy" id="595496"/>
    <lineage>
        <taxon>Bacteria</taxon>
        <taxon>Pseudomonadati</taxon>
        <taxon>Pseudomonadota</taxon>
        <taxon>Gammaproteobacteria</taxon>
        <taxon>Enterobacterales</taxon>
        <taxon>Enterobacteriaceae</taxon>
        <taxon>Escherichia</taxon>
    </lineage>
</organism>
<evidence type="ECO:0000255" key="1">
    <source>
        <dbReference type="HAMAP-Rule" id="MF_01649"/>
    </source>
</evidence>
<reference key="1">
    <citation type="journal article" date="2009" name="J. Bacteriol.">
        <title>Genomic sequencing reveals regulatory mutations and recombinational events in the widely used MC4100 lineage of Escherichia coli K-12.</title>
        <authorList>
            <person name="Ferenci T."/>
            <person name="Zhou Z."/>
            <person name="Betteridge T."/>
            <person name="Ren Y."/>
            <person name="Liu Y."/>
            <person name="Feng L."/>
            <person name="Reeves P.R."/>
            <person name="Wang L."/>
        </authorList>
    </citation>
    <scope>NUCLEOTIDE SEQUENCE [LARGE SCALE GENOMIC DNA]</scope>
    <source>
        <strain>K12 / MC4100 / BW2952</strain>
    </source>
</reference>
<name>HCAF_ECOBW</name>